<accession>Q03I50</accession>
<name>RL9_PEDPA</name>
<keyword id="KW-0687">Ribonucleoprotein</keyword>
<keyword id="KW-0689">Ribosomal protein</keyword>
<keyword id="KW-0694">RNA-binding</keyword>
<keyword id="KW-0699">rRNA-binding</keyword>
<comment type="function">
    <text evidence="1">Binds to the 23S rRNA.</text>
</comment>
<comment type="similarity">
    <text evidence="1">Belongs to the bacterial ribosomal protein bL9 family.</text>
</comment>
<sequence length="150" mass="16509">MKVIFLEDVKGKGKRGEVKNVSDGYAQNFLIKNGKAKAATSAAVSELKGQKKAEAKHEAEILADAEKLKTVLENDKTVVEIKAKAGKDGRLFGSIPNKQIATALEKQYKIKIDKRKIELSNPIRSMGYTNVPVKLHQKVTATIRVHVAEQ</sequence>
<protein>
    <recommendedName>
        <fullName evidence="1">Large ribosomal subunit protein bL9</fullName>
    </recommendedName>
    <alternativeName>
        <fullName evidence="2">50S ribosomal protein L9</fullName>
    </alternativeName>
</protein>
<feature type="chain" id="PRO_1000014827" description="Large ribosomal subunit protein bL9">
    <location>
        <begin position="1"/>
        <end position="150"/>
    </location>
</feature>
<proteinExistence type="inferred from homology"/>
<evidence type="ECO:0000255" key="1">
    <source>
        <dbReference type="HAMAP-Rule" id="MF_00503"/>
    </source>
</evidence>
<evidence type="ECO:0000305" key="2"/>
<dbReference type="EMBL" id="CP000422">
    <property type="protein sequence ID" value="ABJ67122.1"/>
    <property type="molecule type" value="Genomic_DNA"/>
</dbReference>
<dbReference type="RefSeq" id="WP_011672767.1">
    <property type="nucleotide sequence ID" value="NC_008525.1"/>
</dbReference>
<dbReference type="SMR" id="Q03I50"/>
<dbReference type="STRING" id="278197.PEPE_0011"/>
<dbReference type="GeneID" id="33062011"/>
<dbReference type="KEGG" id="ppe:PEPE_0011"/>
<dbReference type="eggNOG" id="COG0359">
    <property type="taxonomic scope" value="Bacteria"/>
</dbReference>
<dbReference type="HOGENOM" id="CLU_078938_3_2_9"/>
<dbReference type="OrthoDB" id="9788336at2"/>
<dbReference type="Proteomes" id="UP000000773">
    <property type="component" value="Chromosome"/>
</dbReference>
<dbReference type="GO" id="GO:1990904">
    <property type="term" value="C:ribonucleoprotein complex"/>
    <property type="evidence" value="ECO:0007669"/>
    <property type="project" value="UniProtKB-KW"/>
</dbReference>
<dbReference type="GO" id="GO:0005840">
    <property type="term" value="C:ribosome"/>
    <property type="evidence" value="ECO:0007669"/>
    <property type="project" value="UniProtKB-KW"/>
</dbReference>
<dbReference type="GO" id="GO:0019843">
    <property type="term" value="F:rRNA binding"/>
    <property type="evidence" value="ECO:0007669"/>
    <property type="project" value="UniProtKB-UniRule"/>
</dbReference>
<dbReference type="GO" id="GO:0003735">
    <property type="term" value="F:structural constituent of ribosome"/>
    <property type="evidence" value="ECO:0007669"/>
    <property type="project" value="InterPro"/>
</dbReference>
<dbReference type="GO" id="GO:0006412">
    <property type="term" value="P:translation"/>
    <property type="evidence" value="ECO:0007669"/>
    <property type="project" value="UniProtKB-UniRule"/>
</dbReference>
<dbReference type="FunFam" id="3.10.430.100:FF:000002">
    <property type="entry name" value="50S ribosomal protein L9"/>
    <property type="match status" value="1"/>
</dbReference>
<dbReference type="FunFam" id="3.40.5.10:FF:000002">
    <property type="entry name" value="50S ribosomal protein L9"/>
    <property type="match status" value="1"/>
</dbReference>
<dbReference type="Gene3D" id="3.10.430.100">
    <property type="entry name" value="Ribosomal protein L9, C-terminal domain"/>
    <property type="match status" value="1"/>
</dbReference>
<dbReference type="Gene3D" id="3.40.5.10">
    <property type="entry name" value="Ribosomal protein L9, N-terminal domain"/>
    <property type="match status" value="1"/>
</dbReference>
<dbReference type="HAMAP" id="MF_00503">
    <property type="entry name" value="Ribosomal_bL9"/>
    <property type="match status" value="1"/>
</dbReference>
<dbReference type="InterPro" id="IPR000244">
    <property type="entry name" value="Ribosomal_bL9"/>
</dbReference>
<dbReference type="InterPro" id="IPR009027">
    <property type="entry name" value="Ribosomal_bL9/RNase_H1_N"/>
</dbReference>
<dbReference type="InterPro" id="IPR020594">
    <property type="entry name" value="Ribosomal_bL9_bac/chp"/>
</dbReference>
<dbReference type="InterPro" id="IPR020069">
    <property type="entry name" value="Ribosomal_bL9_C"/>
</dbReference>
<dbReference type="InterPro" id="IPR036791">
    <property type="entry name" value="Ribosomal_bL9_C_sf"/>
</dbReference>
<dbReference type="InterPro" id="IPR020070">
    <property type="entry name" value="Ribosomal_bL9_N"/>
</dbReference>
<dbReference type="InterPro" id="IPR036935">
    <property type="entry name" value="Ribosomal_bL9_N_sf"/>
</dbReference>
<dbReference type="NCBIfam" id="TIGR00158">
    <property type="entry name" value="L9"/>
    <property type="match status" value="1"/>
</dbReference>
<dbReference type="PANTHER" id="PTHR21368">
    <property type="entry name" value="50S RIBOSOMAL PROTEIN L9"/>
    <property type="match status" value="1"/>
</dbReference>
<dbReference type="Pfam" id="PF03948">
    <property type="entry name" value="Ribosomal_L9_C"/>
    <property type="match status" value="1"/>
</dbReference>
<dbReference type="Pfam" id="PF01281">
    <property type="entry name" value="Ribosomal_L9_N"/>
    <property type="match status" value="1"/>
</dbReference>
<dbReference type="SUPFAM" id="SSF55658">
    <property type="entry name" value="L9 N-domain-like"/>
    <property type="match status" value="1"/>
</dbReference>
<dbReference type="SUPFAM" id="SSF55653">
    <property type="entry name" value="Ribosomal protein L9 C-domain"/>
    <property type="match status" value="1"/>
</dbReference>
<dbReference type="PROSITE" id="PS00651">
    <property type="entry name" value="RIBOSOMAL_L9"/>
    <property type="match status" value="1"/>
</dbReference>
<reference key="1">
    <citation type="journal article" date="2006" name="Proc. Natl. Acad. Sci. U.S.A.">
        <title>Comparative genomics of the lactic acid bacteria.</title>
        <authorList>
            <person name="Makarova K.S."/>
            <person name="Slesarev A."/>
            <person name="Wolf Y.I."/>
            <person name="Sorokin A."/>
            <person name="Mirkin B."/>
            <person name="Koonin E.V."/>
            <person name="Pavlov A."/>
            <person name="Pavlova N."/>
            <person name="Karamychev V."/>
            <person name="Polouchine N."/>
            <person name="Shakhova V."/>
            <person name="Grigoriev I."/>
            <person name="Lou Y."/>
            <person name="Rohksar D."/>
            <person name="Lucas S."/>
            <person name="Huang K."/>
            <person name="Goodstein D.M."/>
            <person name="Hawkins T."/>
            <person name="Plengvidhya V."/>
            <person name="Welker D."/>
            <person name="Hughes J."/>
            <person name="Goh Y."/>
            <person name="Benson A."/>
            <person name="Baldwin K."/>
            <person name="Lee J.-H."/>
            <person name="Diaz-Muniz I."/>
            <person name="Dosti B."/>
            <person name="Smeianov V."/>
            <person name="Wechter W."/>
            <person name="Barabote R."/>
            <person name="Lorca G."/>
            <person name="Altermann E."/>
            <person name="Barrangou R."/>
            <person name="Ganesan B."/>
            <person name="Xie Y."/>
            <person name="Rawsthorne H."/>
            <person name="Tamir D."/>
            <person name="Parker C."/>
            <person name="Breidt F."/>
            <person name="Broadbent J.R."/>
            <person name="Hutkins R."/>
            <person name="O'Sullivan D."/>
            <person name="Steele J."/>
            <person name="Unlu G."/>
            <person name="Saier M.H. Jr."/>
            <person name="Klaenhammer T."/>
            <person name="Richardson P."/>
            <person name="Kozyavkin S."/>
            <person name="Weimer B.C."/>
            <person name="Mills D.A."/>
        </authorList>
    </citation>
    <scope>NUCLEOTIDE SEQUENCE [LARGE SCALE GENOMIC DNA]</scope>
    <source>
        <strain>ATCC 25745 / CCUG 21536 / LMG 10740 / 183-1w</strain>
    </source>
</reference>
<organism>
    <name type="scientific">Pediococcus pentosaceus (strain ATCC 25745 / CCUG 21536 / LMG 10740 / 183-1w)</name>
    <dbReference type="NCBI Taxonomy" id="278197"/>
    <lineage>
        <taxon>Bacteria</taxon>
        <taxon>Bacillati</taxon>
        <taxon>Bacillota</taxon>
        <taxon>Bacilli</taxon>
        <taxon>Lactobacillales</taxon>
        <taxon>Lactobacillaceae</taxon>
        <taxon>Pediococcus</taxon>
    </lineage>
</organism>
<gene>
    <name evidence="1" type="primary">rplI</name>
    <name type="ordered locus">PEPE_0011</name>
</gene>